<organism>
    <name type="scientific">Drosophila melanogaster</name>
    <name type="common">Fruit fly</name>
    <dbReference type="NCBI Taxonomy" id="7227"/>
    <lineage>
        <taxon>Eukaryota</taxon>
        <taxon>Metazoa</taxon>
        <taxon>Ecdysozoa</taxon>
        <taxon>Arthropoda</taxon>
        <taxon>Hexapoda</taxon>
        <taxon>Insecta</taxon>
        <taxon>Pterygota</taxon>
        <taxon>Neoptera</taxon>
        <taxon>Endopterygota</taxon>
        <taxon>Diptera</taxon>
        <taxon>Brachycera</taxon>
        <taxon>Muscomorpha</taxon>
        <taxon>Ephydroidea</taxon>
        <taxon>Drosophilidae</taxon>
        <taxon>Drosophila</taxon>
        <taxon>Sophophora</taxon>
    </lineage>
</organism>
<comment type="catalytic activity">
    <reaction>
        <text>a myo-inositol phosphate + H2O = myo-inositol + phosphate</text>
        <dbReference type="Rhea" id="RHEA:24056"/>
        <dbReference type="ChEBI" id="CHEBI:15377"/>
        <dbReference type="ChEBI" id="CHEBI:17268"/>
        <dbReference type="ChEBI" id="CHEBI:43474"/>
        <dbReference type="ChEBI" id="CHEBI:84139"/>
        <dbReference type="EC" id="3.1.3.25"/>
    </reaction>
</comment>
<comment type="cofactor">
    <cofactor evidence="1">
        <name>Mg(2+)</name>
        <dbReference type="ChEBI" id="CHEBI:18420"/>
    </cofactor>
</comment>
<comment type="pathway">
    <text>Polyol metabolism; myo-inositol biosynthesis; myo-inositol from D-glucose 6-phosphate: step 2/2.</text>
</comment>
<comment type="subcellular location">
    <subcellularLocation>
        <location evidence="3">Membrane</location>
        <topology evidence="3">Single-pass membrane protein</topology>
    </subcellularLocation>
</comment>
<comment type="similarity">
    <text evidence="3">Belongs to the inositol monophosphatase superfamily.</text>
</comment>
<feature type="chain" id="PRO_0000289046" description="Putative inositol monophosphatase 3">
    <location>
        <begin position="1"/>
        <end position="355"/>
    </location>
</feature>
<feature type="transmembrane region" description="Helical" evidence="2">
    <location>
        <begin position="16"/>
        <end position="36"/>
    </location>
</feature>
<feature type="binding site" evidence="1">
    <location>
        <position position="127"/>
    </location>
    <ligand>
        <name>Mg(2+)</name>
        <dbReference type="ChEBI" id="CHEBI:18420"/>
        <label>1</label>
    </ligand>
</feature>
<feature type="binding site" evidence="1">
    <location>
        <position position="127"/>
    </location>
    <ligand>
        <name>substrate</name>
    </ligand>
</feature>
<feature type="binding site" evidence="1">
    <location>
        <position position="167"/>
    </location>
    <ligand>
        <name>Mg(2+)</name>
        <dbReference type="ChEBI" id="CHEBI:18420"/>
        <label>1</label>
    </ligand>
</feature>
<feature type="binding site" evidence="1">
    <location>
        <position position="167"/>
    </location>
    <ligand>
        <name>Mg(2+)</name>
        <dbReference type="ChEBI" id="CHEBI:18420"/>
        <label>2</label>
    </ligand>
</feature>
<feature type="binding site" evidence="1">
    <location>
        <begin position="169"/>
        <end position="172"/>
    </location>
    <ligand>
        <name>substrate</name>
    </ligand>
</feature>
<feature type="binding site" evidence="1">
    <location>
        <position position="169"/>
    </location>
    <ligand>
        <name>Mg(2+)</name>
        <dbReference type="ChEBI" id="CHEBI:18420"/>
        <label>1</label>
    </ligand>
</feature>
<feature type="binding site" evidence="1">
    <location>
        <position position="170"/>
    </location>
    <ligand>
        <name>Mg(2+)</name>
        <dbReference type="ChEBI" id="CHEBI:18420"/>
        <label>2</label>
    </ligand>
</feature>
<feature type="binding site" evidence="1">
    <location>
        <position position="292"/>
    </location>
    <ligand>
        <name>Mg(2+)</name>
        <dbReference type="ChEBI" id="CHEBI:18420"/>
        <label>2</label>
    </ligand>
</feature>
<feature type="binding site" evidence="1">
    <location>
        <position position="292"/>
    </location>
    <ligand>
        <name>substrate</name>
    </ligand>
</feature>
<protein>
    <recommendedName>
        <fullName>Putative inositol monophosphatase 3</fullName>
        <shortName>IMP 3</shortName>
        <shortName>IMPase 3</shortName>
        <ecNumber>3.1.3.25</ecNumber>
    </recommendedName>
    <alternativeName>
        <fullName>Inositol-1(or 4)-monophosphatase 3</fullName>
    </alternativeName>
    <alternativeName>
        <fullName>Myo-inositol monophosphatase A3</fullName>
    </alternativeName>
</protein>
<gene>
    <name type="ORF">CG15743</name>
</gene>
<accession>Q9VYF2</accession>
<name>IMPA3_DROME</name>
<evidence type="ECO:0000250" key="1"/>
<evidence type="ECO:0000255" key="2"/>
<evidence type="ECO:0000305" key="3"/>
<sequence length="355" mass="39336">MSEDKMNGRSIRINRLPATIVAILLTFVLVYFLNFHQEERPAIYGMLRSENPSRVNLRKMLIAAIQAAQRGGLEVLDVARSRQLKERSKGKTDEGVNDPFTDADGRSHCVMKQGLQRIFPRVQIFSEEDKEHCKQAHGYDLDPTVLHETAQIPDVTVNAQDVTVWVDPLDATKEFTEELYEYVTTMVCVAVAGRPIIGVIHSPFNGQTAWAWVGNSMSEYLSNLHPQHSPNNQAPIITVSRSHTAGAKDLARGIFGENVSLLTAAGAGYKVLQVVANNATAYLHTSKIKKWDICAGDAILHALGGTMTTLNDQLINYGPEESPVNTEGLLATLEQHDEYMDKLSKYREAHNGKLA</sequence>
<reference key="1">
    <citation type="journal article" date="2000" name="Science">
        <title>The genome sequence of Drosophila melanogaster.</title>
        <authorList>
            <person name="Adams M.D."/>
            <person name="Celniker S.E."/>
            <person name="Holt R.A."/>
            <person name="Evans C.A."/>
            <person name="Gocayne J.D."/>
            <person name="Amanatides P.G."/>
            <person name="Scherer S.E."/>
            <person name="Li P.W."/>
            <person name="Hoskins R.A."/>
            <person name="Galle R.F."/>
            <person name="George R.A."/>
            <person name="Lewis S.E."/>
            <person name="Richards S."/>
            <person name="Ashburner M."/>
            <person name="Henderson S.N."/>
            <person name="Sutton G.G."/>
            <person name="Wortman J.R."/>
            <person name="Yandell M.D."/>
            <person name="Zhang Q."/>
            <person name="Chen L.X."/>
            <person name="Brandon R.C."/>
            <person name="Rogers Y.-H.C."/>
            <person name="Blazej R.G."/>
            <person name="Champe M."/>
            <person name="Pfeiffer B.D."/>
            <person name="Wan K.H."/>
            <person name="Doyle C."/>
            <person name="Baxter E.G."/>
            <person name="Helt G."/>
            <person name="Nelson C.R."/>
            <person name="Miklos G.L.G."/>
            <person name="Abril J.F."/>
            <person name="Agbayani A."/>
            <person name="An H.-J."/>
            <person name="Andrews-Pfannkoch C."/>
            <person name="Baldwin D."/>
            <person name="Ballew R.M."/>
            <person name="Basu A."/>
            <person name="Baxendale J."/>
            <person name="Bayraktaroglu L."/>
            <person name="Beasley E.M."/>
            <person name="Beeson K.Y."/>
            <person name="Benos P.V."/>
            <person name="Berman B.P."/>
            <person name="Bhandari D."/>
            <person name="Bolshakov S."/>
            <person name="Borkova D."/>
            <person name="Botchan M.R."/>
            <person name="Bouck J."/>
            <person name="Brokstein P."/>
            <person name="Brottier P."/>
            <person name="Burtis K.C."/>
            <person name="Busam D.A."/>
            <person name="Butler H."/>
            <person name="Cadieu E."/>
            <person name="Center A."/>
            <person name="Chandra I."/>
            <person name="Cherry J.M."/>
            <person name="Cawley S."/>
            <person name="Dahlke C."/>
            <person name="Davenport L.B."/>
            <person name="Davies P."/>
            <person name="de Pablos B."/>
            <person name="Delcher A."/>
            <person name="Deng Z."/>
            <person name="Mays A.D."/>
            <person name="Dew I."/>
            <person name="Dietz S.M."/>
            <person name="Dodson K."/>
            <person name="Doup L.E."/>
            <person name="Downes M."/>
            <person name="Dugan-Rocha S."/>
            <person name="Dunkov B.C."/>
            <person name="Dunn P."/>
            <person name="Durbin K.J."/>
            <person name="Evangelista C.C."/>
            <person name="Ferraz C."/>
            <person name="Ferriera S."/>
            <person name="Fleischmann W."/>
            <person name="Fosler C."/>
            <person name="Gabrielian A.E."/>
            <person name="Garg N.S."/>
            <person name="Gelbart W.M."/>
            <person name="Glasser K."/>
            <person name="Glodek A."/>
            <person name="Gong F."/>
            <person name="Gorrell J.H."/>
            <person name="Gu Z."/>
            <person name="Guan P."/>
            <person name="Harris M."/>
            <person name="Harris N.L."/>
            <person name="Harvey D.A."/>
            <person name="Heiman T.J."/>
            <person name="Hernandez J.R."/>
            <person name="Houck J."/>
            <person name="Hostin D."/>
            <person name="Houston K.A."/>
            <person name="Howland T.J."/>
            <person name="Wei M.-H."/>
            <person name="Ibegwam C."/>
            <person name="Jalali M."/>
            <person name="Kalush F."/>
            <person name="Karpen G.H."/>
            <person name="Ke Z."/>
            <person name="Kennison J.A."/>
            <person name="Ketchum K.A."/>
            <person name="Kimmel B.E."/>
            <person name="Kodira C.D."/>
            <person name="Kraft C.L."/>
            <person name="Kravitz S."/>
            <person name="Kulp D."/>
            <person name="Lai Z."/>
            <person name="Lasko P."/>
            <person name="Lei Y."/>
            <person name="Levitsky A.A."/>
            <person name="Li J.H."/>
            <person name="Li Z."/>
            <person name="Liang Y."/>
            <person name="Lin X."/>
            <person name="Liu X."/>
            <person name="Mattei B."/>
            <person name="McIntosh T.C."/>
            <person name="McLeod M.P."/>
            <person name="McPherson D."/>
            <person name="Merkulov G."/>
            <person name="Milshina N.V."/>
            <person name="Mobarry C."/>
            <person name="Morris J."/>
            <person name="Moshrefi A."/>
            <person name="Mount S.M."/>
            <person name="Moy M."/>
            <person name="Murphy B."/>
            <person name="Murphy L."/>
            <person name="Muzny D.M."/>
            <person name="Nelson D.L."/>
            <person name="Nelson D.R."/>
            <person name="Nelson K.A."/>
            <person name="Nixon K."/>
            <person name="Nusskern D.R."/>
            <person name="Pacleb J.M."/>
            <person name="Palazzolo M."/>
            <person name="Pittman G.S."/>
            <person name="Pan S."/>
            <person name="Pollard J."/>
            <person name="Puri V."/>
            <person name="Reese M.G."/>
            <person name="Reinert K."/>
            <person name="Remington K."/>
            <person name="Saunders R.D.C."/>
            <person name="Scheeler F."/>
            <person name="Shen H."/>
            <person name="Shue B.C."/>
            <person name="Siden-Kiamos I."/>
            <person name="Simpson M."/>
            <person name="Skupski M.P."/>
            <person name="Smith T.J."/>
            <person name="Spier E."/>
            <person name="Spradling A.C."/>
            <person name="Stapleton M."/>
            <person name="Strong R."/>
            <person name="Sun E."/>
            <person name="Svirskas R."/>
            <person name="Tector C."/>
            <person name="Turner R."/>
            <person name="Venter E."/>
            <person name="Wang A.H."/>
            <person name="Wang X."/>
            <person name="Wang Z.-Y."/>
            <person name="Wassarman D.A."/>
            <person name="Weinstock G.M."/>
            <person name="Weissenbach J."/>
            <person name="Williams S.M."/>
            <person name="Woodage T."/>
            <person name="Worley K.C."/>
            <person name="Wu D."/>
            <person name="Yang S."/>
            <person name="Yao Q.A."/>
            <person name="Ye J."/>
            <person name="Yeh R.-F."/>
            <person name="Zaveri J.S."/>
            <person name="Zhan M."/>
            <person name="Zhang G."/>
            <person name="Zhao Q."/>
            <person name="Zheng L."/>
            <person name="Zheng X.H."/>
            <person name="Zhong F.N."/>
            <person name="Zhong W."/>
            <person name="Zhou X."/>
            <person name="Zhu S.C."/>
            <person name="Zhu X."/>
            <person name="Smith H.O."/>
            <person name="Gibbs R.A."/>
            <person name="Myers E.W."/>
            <person name="Rubin G.M."/>
            <person name="Venter J.C."/>
        </authorList>
    </citation>
    <scope>NUCLEOTIDE SEQUENCE [LARGE SCALE GENOMIC DNA]</scope>
    <source>
        <strain>Berkeley</strain>
    </source>
</reference>
<reference key="2">
    <citation type="journal article" date="2002" name="Genome Biol.">
        <title>Annotation of the Drosophila melanogaster euchromatic genome: a systematic review.</title>
        <authorList>
            <person name="Misra S."/>
            <person name="Crosby M.A."/>
            <person name="Mungall C.J."/>
            <person name="Matthews B.B."/>
            <person name="Campbell K.S."/>
            <person name="Hradecky P."/>
            <person name="Huang Y."/>
            <person name="Kaminker J.S."/>
            <person name="Millburn G.H."/>
            <person name="Prochnik S.E."/>
            <person name="Smith C.D."/>
            <person name="Tupy J.L."/>
            <person name="Whitfield E.J."/>
            <person name="Bayraktaroglu L."/>
            <person name="Berman B.P."/>
            <person name="Bettencourt B.R."/>
            <person name="Celniker S.E."/>
            <person name="de Grey A.D.N.J."/>
            <person name="Drysdale R.A."/>
            <person name="Harris N.L."/>
            <person name="Richter J."/>
            <person name="Russo S."/>
            <person name="Schroeder A.J."/>
            <person name="Shu S.Q."/>
            <person name="Stapleton M."/>
            <person name="Yamada C."/>
            <person name="Ashburner M."/>
            <person name="Gelbart W.M."/>
            <person name="Rubin G.M."/>
            <person name="Lewis S.E."/>
        </authorList>
    </citation>
    <scope>GENOME REANNOTATION</scope>
    <source>
        <strain>Berkeley</strain>
    </source>
</reference>
<reference key="3">
    <citation type="journal article" date="2002" name="Genome Biol.">
        <title>A Drosophila full-length cDNA resource.</title>
        <authorList>
            <person name="Stapleton M."/>
            <person name="Carlson J.W."/>
            <person name="Brokstein P."/>
            <person name="Yu C."/>
            <person name="Champe M."/>
            <person name="George R.A."/>
            <person name="Guarin H."/>
            <person name="Kronmiller B."/>
            <person name="Pacleb J.M."/>
            <person name="Park S."/>
            <person name="Wan K.H."/>
            <person name="Rubin G.M."/>
            <person name="Celniker S.E."/>
        </authorList>
    </citation>
    <scope>NUCLEOTIDE SEQUENCE [LARGE SCALE MRNA]</scope>
    <source>
        <strain>Berkeley</strain>
        <tissue>Embryo</tissue>
    </source>
</reference>
<dbReference type="EC" id="3.1.3.25"/>
<dbReference type="EMBL" id="AE014298">
    <property type="protein sequence ID" value="AAF48246.1"/>
    <property type="molecule type" value="Genomic_DNA"/>
</dbReference>
<dbReference type="EMBL" id="BT004861">
    <property type="protein sequence ID" value="AAO45217.1"/>
    <property type="molecule type" value="mRNA"/>
</dbReference>
<dbReference type="RefSeq" id="NP_001259511.1">
    <property type="nucleotide sequence ID" value="NM_001272582.1"/>
</dbReference>
<dbReference type="RefSeq" id="NP_001285197.1">
    <property type="nucleotide sequence ID" value="NM_001298268.1"/>
</dbReference>
<dbReference type="RefSeq" id="NP_572869.1">
    <property type="nucleotide sequence ID" value="NM_132641.2"/>
</dbReference>
<dbReference type="SMR" id="Q9VYF2"/>
<dbReference type="FunCoup" id="Q9VYF2">
    <property type="interactions" value="1430"/>
</dbReference>
<dbReference type="IntAct" id="Q9VYF2">
    <property type="interactions" value="2"/>
</dbReference>
<dbReference type="STRING" id="7227.FBpp0311952"/>
<dbReference type="PaxDb" id="7227-FBpp0073586"/>
<dbReference type="DNASU" id="32279"/>
<dbReference type="EnsemblMetazoa" id="FBtr0073755">
    <property type="protein sequence ID" value="FBpp0073586"/>
    <property type="gene ID" value="FBgn0030465"/>
</dbReference>
<dbReference type="EnsemblMetazoa" id="FBtr0333330">
    <property type="protein sequence ID" value="FBpp0305522"/>
    <property type="gene ID" value="FBgn0030465"/>
</dbReference>
<dbReference type="EnsemblMetazoa" id="FBtr0346123">
    <property type="protein sequence ID" value="FBpp0311952"/>
    <property type="gene ID" value="FBgn0030465"/>
</dbReference>
<dbReference type="GeneID" id="32279"/>
<dbReference type="KEGG" id="dme:Dmel_CG15743"/>
<dbReference type="UCSC" id="CG15743-RA">
    <property type="organism name" value="d. melanogaster"/>
</dbReference>
<dbReference type="AGR" id="FB:FBgn0030465"/>
<dbReference type="FlyBase" id="FBgn0030465">
    <property type="gene designation" value="CG15743"/>
</dbReference>
<dbReference type="VEuPathDB" id="VectorBase:FBgn0030465"/>
<dbReference type="eggNOG" id="KOG3853">
    <property type="taxonomic scope" value="Eukaryota"/>
</dbReference>
<dbReference type="GeneTree" id="ENSGT00940000164879"/>
<dbReference type="HOGENOM" id="CLU_034742_0_1_1"/>
<dbReference type="InParanoid" id="Q9VYF2"/>
<dbReference type="OMA" id="VKQVAWQ"/>
<dbReference type="OrthoDB" id="74460at2759"/>
<dbReference type="PhylomeDB" id="Q9VYF2"/>
<dbReference type="Reactome" id="R-DME-156584">
    <property type="pathway name" value="Cytosolic sulfonation of small molecules"/>
</dbReference>
<dbReference type="UniPathway" id="UPA00823">
    <property type="reaction ID" value="UER00788"/>
</dbReference>
<dbReference type="BioGRID-ORCS" id="32279">
    <property type="hits" value="0 hits in 3 CRISPR screens"/>
</dbReference>
<dbReference type="GenomeRNAi" id="32279"/>
<dbReference type="PRO" id="PR:Q9VYF2"/>
<dbReference type="Proteomes" id="UP000000803">
    <property type="component" value="Chromosome X"/>
</dbReference>
<dbReference type="Bgee" id="FBgn0030465">
    <property type="expression patterns" value="Expressed in spermatid in male reproductive gland and 67 other cell types or tissues"/>
</dbReference>
<dbReference type="ExpressionAtlas" id="Q9VYF2">
    <property type="expression patterns" value="baseline and differential"/>
</dbReference>
<dbReference type="GO" id="GO:0012505">
    <property type="term" value="C:endomembrane system"/>
    <property type="evidence" value="ECO:0007005"/>
    <property type="project" value="FlyBase"/>
</dbReference>
<dbReference type="GO" id="GO:0016020">
    <property type="term" value="C:membrane"/>
    <property type="evidence" value="ECO:0007669"/>
    <property type="project" value="UniProtKB-SubCell"/>
</dbReference>
<dbReference type="GO" id="GO:0008254">
    <property type="term" value="F:3'-nucleotidase activity"/>
    <property type="evidence" value="ECO:0000318"/>
    <property type="project" value="GO_Central"/>
</dbReference>
<dbReference type="GO" id="GO:0052834">
    <property type="term" value="F:inositol monophosphate phosphatase activity"/>
    <property type="evidence" value="ECO:0007669"/>
    <property type="project" value="UniProtKB-EC"/>
</dbReference>
<dbReference type="GO" id="GO:0046872">
    <property type="term" value="F:metal ion binding"/>
    <property type="evidence" value="ECO:0007669"/>
    <property type="project" value="UniProtKB-KW"/>
</dbReference>
<dbReference type="GO" id="GO:0006021">
    <property type="term" value="P:inositol biosynthetic process"/>
    <property type="evidence" value="ECO:0007669"/>
    <property type="project" value="UniProtKB-UniPathway"/>
</dbReference>
<dbReference type="GO" id="GO:0046854">
    <property type="term" value="P:phosphatidylinositol phosphate biosynthetic process"/>
    <property type="evidence" value="ECO:0007669"/>
    <property type="project" value="InterPro"/>
</dbReference>
<dbReference type="CDD" id="cd01640">
    <property type="entry name" value="IPPase"/>
    <property type="match status" value="1"/>
</dbReference>
<dbReference type="FunFam" id="3.30.540.10:FF:000012">
    <property type="entry name" value="Blast:Putative inositol monophosphatase 3"/>
    <property type="match status" value="1"/>
</dbReference>
<dbReference type="FunFam" id="3.40.190.80:FF:000007">
    <property type="entry name" value="Blast:Putative inositol monophosphatase 3"/>
    <property type="match status" value="1"/>
</dbReference>
<dbReference type="Gene3D" id="3.40.190.80">
    <property type="match status" value="1"/>
</dbReference>
<dbReference type="Gene3D" id="3.30.540.10">
    <property type="entry name" value="Fructose-1,6-Bisphosphatase, subunit A, domain 1"/>
    <property type="match status" value="1"/>
</dbReference>
<dbReference type="InterPro" id="IPR050725">
    <property type="entry name" value="CysQ/Inositol_MonoPase"/>
</dbReference>
<dbReference type="InterPro" id="IPR000760">
    <property type="entry name" value="Inositol_monophosphatase-like"/>
</dbReference>
<dbReference type="InterPro" id="IPR020550">
    <property type="entry name" value="Inositol_monophosphatase_CS"/>
</dbReference>
<dbReference type="PANTHER" id="PTHR43028">
    <property type="entry name" value="3'(2'),5'-BISPHOSPHATE NUCLEOTIDASE 1"/>
    <property type="match status" value="1"/>
</dbReference>
<dbReference type="PANTHER" id="PTHR43028:SF4">
    <property type="entry name" value="INOSITOL MONOPHOSPHATASE 3"/>
    <property type="match status" value="1"/>
</dbReference>
<dbReference type="Pfam" id="PF00459">
    <property type="entry name" value="Inositol_P"/>
    <property type="match status" value="1"/>
</dbReference>
<dbReference type="SUPFAM" id="SSF56655">
    <property type="entry name" value="Carbohydrate phosphatase"/>
    <property type="match status" value="1"/>
</dbReference>
<dbReference type="PROSITE" id="PS00630">
    <property type="entry name" value="IMP_2"/>
    <property type="match status" value="1"/>
</dbReference>
<keyword id="KW-0378">Hydrolase</keyword>
<keyword id="KW-0460">Magnesium</keyword>
<keyword id="KW-0472">Membrane</keyword>
<keyword id="KW-0479">Metal-binding</keyword>
<keyword id="KW-1185">Reference proteome</keyword>
<keyword id="KW-0812">Transmembrane</keyword>
<keyword id="KW-1133">Transmembrane helix</keyword>
<proteinExistence type="evidence at transcript level"/>